<sequence>MAKKGKKYQEALKLVDKTNLYDPKEAIELAKKTATAKFDETVEAHIKLGVDSRHADQQVRGAVVLPHGTGKTVRILVFAKGEKAIEAEKAGADYVGGDELVAKIQGENWFEFDVVVATPDMMGVVGRLGRVLGPKGLMPNPKSGTVTFDLTKAVNEIKAGKVEYRLDKTNIIHVPLGKASFEETQLVENFRTLLDAVVKAKPAAAKGQYLKSITVTSTMGPGIKINPLKVME</sequence>
<accession>A8MLC9</accession>
<keyword id="KW-1185">Reference proteome</keyword>
<keyword id="KW-0678">Repressor</keyword>
<keyword id="KW-0687">Ribonucleoprotein</keyword>
<keyword id="KW-0689">Ribosomal protein</keyword>
<keyword id="KW-0694">RNA-binding</keyword>
<keyword id="KW-0699">rRNA-binding</keyword>
<keyword id="KW-0810">Translation regulation</keyword>
<keyword id="KW-0820">tRNA-binding</keyword>
<name>RL1_ALKOO</name>
<proteinExistence type="inferred from homology"/>
<evidence type="ECO:0000255" key="1">
    <source>
        <dbReference type="HAMAP-Rule" id="MF_01318"/>
    </source>
</evidence>
<evidence type="ECO:0000305" key="2"/>
<dbReference type="EMBL" id="CP000853">
    <property type="protein sequence ID" value="ABW18043.1"/>
    <property type="molecule type" value="Genomic_DNA"/>
</dbReference>
<dbReference type="RefSeq" id="WP_012158358.1">
    <property type="nucleotide sequence ID" value="NC_009922.1"/>
</dbReference>
<dbReference type="SMR" id="A8MLC9"/>
<dbReference type="STRING" id="350688.Clos_0481"/>
<dbReference type="KEGG" id="aoe:Clos_0481"/>
<dbReference type="eggNOG" id="COG0081">
    <property type="taxonomic scope" value="Bacteria"/>
</dbReference>
<dbReference type="HOGENOM" id="CLU_062853_0_0_9"/>
<dbReference type="OrthoDB" id="9803740at2"/>
<dbReference type="Proteomes" id="UP000000269">
    <property type="component" value="Chromosome"/>
</dbReference>
<dbReference type="GO" id="GO:0015934">
    <property type="term" value="C:large ribosomal subunit"/>
    <property type="evidence" value="ECO:0007669"/>
    <property type="project" value="InterPro"/>
</dbReference>
<dbReference type="GO" id="GO:0019843">
    <property type="term" value="F:rRNA binding"/>
    <property type="evidence" value="ECO:0007669"/>
    <property type="project" value="UniProtKB-UniRule"/>
</dbReference>
<dbReference type="GO" id="GO:0003735">
    <property type="term" value="F:structural constituent of ribosome"/>
    <property type="evidence" value="ECO:0007669"/>
    <property type="project" value="InterPro"/>
</dbReference>
<dbReference type="GO" id="GO:0000049">
    <property type="term" value="F:tRNA binding"/>
    <property type="evidence" value="ECO:0007669"/>
    <property type="project" value="UniProtKB-KW"/>
</dbReference>
<dbReference type="GO" id="GO:0006417">
    <property type="term" value="P:regulation of translation"/>
    <property type="evidence" value="ECO:0007669"/>
    <property type="project" value="UniProtKB-KW"/>
</dbReference>
<dbReference type="GO" id="GO:0006412">
    <property type="term" value="P:translation"/>
    <property type="evidence" value="ECO:0007669"/>
    <property type="project" value="UniProtKB-UniRule"/>
</dbReference>
<dbReference type="CDD" id="cd00403">
    <property type="entry name" value="Ribosomal_L1"/>
    <property type="match status" value="1"/>
</dbReference>
<dbReference type="FunFam" id="3.40.50.790:FF:000001">
    <property type="entry name" value="50S ribosomal protein L1"/>
    <property type="match status" value="1"/>
</dbReference>
<dbReference type="Gene3D" id="3.30.190.20">
    <property type="match status" value="1"/>
</dbReference>
<dbReference type="Gene3D" id="3.40.50.790">
    <property type="match status" value="1"/>
</dbReference>
<dbReference type="HAMAP" id="MF_01318_B">
    <property type="entry name" value="Ribosomal_uL1_B"/>
    <property type="match status" value="1"/>
</dbReference>
<dbReference type="InterPro" id="IPR005878">
    <property type="entry name" value="Ribosom_uL1_bac-type"/>
</dbReference>
<dbReference type="InterPro" id="IPR002143">
    <property type="entry name" value="Ribosomal_uL1"/>
</dbReference>
<dbReference type="InterPro" id="IPR023674">
    <property type="entry name" value="Ribosomal_uL1-like"/>
</dbReference>
<dbReference type="InterPro" id="IPR028364">
    <property type="entry name" value="Ribosomal_uL1/biogenesis"/>
</dbReference>
<dbReference type="InterPro" id="IPR016095">
    <property type="entry name" value="Ribosomal_uL1_3-a/b-sand"/>
</dbReference>
<dbReference type="InterPro" id="IPR023673">
    <property type="entry name" value="Ribosomal_uL1_CS"/>
</dbReference>
<dbReference type="NCBIfam" id="TIGR01169">
    <property type="entry name" value="rplA_bact"/>
    <property type="match status" value="1"/>
</dbReference>
<dbReference type="PANTHER" id="PTHR36427">
    <property type="entry name" value="54S RIBOSOMAL PROTEIN L1, MITOCHONDRIAL"/>
    <property type="match status" value="1"/>
</dbReference>
<dbReference type="PANTHER" id="PTHR36427:SF3">
    <property type="entry name" value="LARGE RIBOSOMAL SUBUNIT PROTEIN UL1M"/>
    <property type="match status" value="1"/>
</dbReference>
<dbReference type="Pfam" id="PF00687">
    <property type="entry name" value="Ribosomal_L1"/>
    <property type="match status" value="1"/>
</dbReference>
<dbReference type="PIRSF" id="PIRSF002155">
    <property type="entry name" value="Ribosomal_L1"/>
    <property type="match status" value="1"/>
</dbReference>
<dbReference type="SUPFAM" id="SSF56808">
    <property type="entry name" value="Ribosomal protein L1"/>
    <property type="match status" value="1"/>
</dbReference>
<dbReference type="PROSITE" id="PS01199">
    <property type="entry name" value="RIBOSOMAL_L1"/>
    <property type="match status" value="1"/>
</dbReference>
<comment type="function">
    <text evidence="1">Binds directly to 23S rRNA. The L1 stalk is quite mobile in the ribosome, and is involved in E site tRNA release.</text>
</comment>
<comment type="function">
    <text evidence="1">Protein L1 is also a translational repressor protein, it controls the translation of the L11 operon by binding to its mRNA.</text>
</comment>
<comment type="subunit">
    <text evidence="1">Part of the 50S ribosomal subunit.</text>
</comment>
<comment type="similarity">
    <text evidence="1">Belongs to the universal ribosomal protein uL1 family.</text>
</comment>
<protein>
    <recommendedName>
        <fullName evidence="1">Large ribosomal subunit protein uL1</fullName>
    </recommendedName>
    <alternativeName>
        <fullName evidence="2">50S ribosomal protein L1</fullName>
    </alternativeName>
</protein>
<feature type="chain" id="PRO_1000067525" description="Large ribosomal subunit protein uL1">
    <location>
        <begin position="1"/>
        <end position="232"/>
    </location>
</feature>
<reference key="1">
    <citation type="submission" date="2007-10" db="EMBL/GenBank/DDBJ databases">
        <title>Complete genome of Alkaliphilus oremlandii OhILAs.</title>
        <authorList>
            <person name="Copeland A."/>
            <person name="Lucas S."/>
            <person name="Lapidus A."/>
            <person name="Barry K."/>
            <person name="Detter J.C."/>
            <person name="Glavina del Rio T."/>
            <person name="Hammon N."/>
            <person name="Israni S."/>
            <person name="Dalin E."/>
            <person name="Tice H."/>
            <person name="Pitluck S."/>
            <person name="Chain P."/>
            <person name="Malfatti S."/>
            <person name="Shin M."/>
            <person name="Vergez L."/>
            <person name="Schmutz J."/>
            <person name="Larimer F."/>
            <person name="Land M."/>
            <person name="Hauser L."/>
            <person name="Kyrpides N."/>
            <person name="Mikhailova N."/>
            <person name="Stolz J.F."/>
            <person name="Dawson A."/>
            <person name="Fisher E."/>
            <person name="Crable B."/>
            <person name="Perera E."/>
            <person name="Lisak J."/>
            <person name="Ranganathan M."/>
            <person name="Basu P."/>
            <person name="Richardson P."/>
        </authorList>
    </citation>
    <scope>NUCLEOTIDE SEQUENCE [LARGE SCALE GENOMIC DNA]</scope>
    <source>
        <strain>OhILAs</strain>
    </source>
</reference>
<gene>
    <name evidence="1" type="primary">rplA</name>
    <name type="ordered locus">Clos_0481</name>
</gene>
<organism>
    <name type="scientific">Alkaliphilus oremlandii (strain OhILAs)</name>
    <name type="common">Clostridium oremlandii (strain OhILAs)</name>
    <dbReference type="NCBI Taxonomy" id="350688"/>
    <lineage>
        <taxon>Bacteria</taxon>
        <taxon>Bacillati</taxon>
        <taxon>Bacillota</taxon>
        <taxon>Clostridia</taxon>
        <taxon>Peptostreptococcales</taxon>
        <taxon>Natronincolaceae</taxon>
        <taxon>Alkaliphilus</taxon>
    </lineage>
</organism>